<evidence type="ECO:0000250" key="1">
    <source>
        <dbReference type="UniProtKB" id="P04798"/>
    </source>
</evidence>
<evidence type="ECO:0000255" key="2"/>
<evidence type="ECO:0000255" key="3">
    <source>
        <dbReference type="PROSITE-ProRule" id="PRU00498"/>
    </source>
</evidence>
<evidence type="ECO:0000269" key="4">
    <source>
    </source>
</evidence>
<evidence type="ECO:0000269" key="5">
    <source>
    </source>
</evidence>
<evidence type="ECO:0000269" key="6">
    <source>
    </source>
</evidence>
<evidence type="ECO:0000269" key="7">
    <source>
    </source>
</evidence>
<evidence type="ECO:0000269" key="8">
    <source>
    </source>
</evidence>
<evidence type="ECO:0000269" key="9">
    <source>
    </source>
</evidence>
<evidence type="ECO:0000303" key="10">
    <source>
    </source>
</evidence>
<evidence type="ECO:0000305" key="11"/>
<evidence type="ECO:0000305" key="12">
    <source>
    </source>
</evidence>
<evidence type="ECO:0000305" key="13">
    <source>
    </source>
</evidence>
<proteinExistence type="inferred from homology"/>
<accession>W6Q403</accession>
<keyword id="KW-0325">Glycoprotein</keyword>
<keyword id="KW-0349">Heme</keyword>
<keyword id="KW-0408">Iron</keyword>
<keyword id="KW-0472">Membrane</keyword>
<keyword id="KW-0479">Metal-binding</keyword>
<keyword id="KW-0503">Monooxygenase</keyword>
<keyword id="KW-0560">Oxidoreductase</keyword>
<keyword id="KW-1185">Reference proteome</keyword>
<keyword id="KW-0812">Transmembrane</keyword>
<keyword id="KW-1133">Transmembrane helix</keyword>
<name>ORF9_PENRF</name>
<reference key="1">
    <citation type="journal article" date="2014" name="Nat. Commun.">
        <title>Multiple recent horizontal transfers of a large genomic region in cheese making fungi.</title>
        <authorList>
            <person name="Cheeseman K."/>
            <person name="Ropars J."/>
            <person name="Renault P."/>
            <person name="Dupont J."/>
            <person name="Gouzy J."/>
            <person name="Branca A."/>
            <person name="Abraham A.-L."/>
            <person name="Ceppi M."/>
            <person name="Conseiller E."/>
            <person name="Debuchy R."/>
            <person name="Malagnac F."/>
            <person name="Goarin A."/>
            <person name="Silar P."/>
            <person name="Lacoste S."/>
            <person name="Sallet E."/>
            <person name="Bensimon A."/>
            <person name="Giraud T."/>
            <person name="Brygoo Y."/>
        </authorList>
    </citation>
    <scope>NUCLEOTIDE SEQUENCE [LARGE SCALE GENOMIC DNA]</scope>
    <source>
        <strain>FM164</strain>
    </source>
</reference>
<reference key="2">
    <citation type="journal article" date="1980" name="Appl. Environ. Microbiol.">
        <title>Production of eremofortins A, B, and C relative to formation of PR toxin by Penicillium roqueforti.</title>
        <authorList>
            <person name="Moreau S."/>
            <person name="Lablache-Combier A."/>
            <person name="Biguet J."/>
        </authorList>
    </citation>
    <scope>FUNCTION</scope>
</reference>
<reference key="3">
    <citation type="journal article" date="1993" name="J. Biol. Chem.">
        <title>Aristolochene synthase. Isolation, characterization, and bacterial expression of a sesquiterpenoid biosynthetic gene (Ari1) from Penicillium roqueforti.</title>
        <authorList>
            <person name="Proctor R.H."/>
            <person name="Hohn T.M."/>
        </authorList>
    </citation>
    <scope>FUNCTION</scope>
</reference>
<reference key="4">
    <citation type="journal article" date="2004" name="J. Am. Chem. Soc.">
        <title>Aristolochene synthase: mechanistic analysis of active site residues by site-directed mutagenesis.</title>
        <authorList>
            <person name="Felicetti B."/>
            <person name="Cane D.E."/>
        </authorList>
    </citation>
    <scope>FUNCTION</scope>
</reference>
<reference key="5">
    <citation type="journal article" date="2014" name="Fungal Genet. Biol.">
        <title>Molecular characterization of the PR-toxin gene cluster in Penicillium roqueforti and Penicillium chrysogenum: cross talk of secondary metabolite pathways.</title>
        <authorList>
            <person name="Hidalgo P.I."/>
            <person name="Ullan R.V."/>
            <person name="Albillos S.M."/>
            <person name="Montero O."/>
            <person name="Fernandez-Bodega M.A."/>
            <person name="Garcia-Estrada C."/>
            <person name="Fernandez-Aguado M."/>
            <person name="Martin J.F."/>
        </authorList>
    </citation>
    <scope>FUNCTION</scope>
</reference>
<reference key="6">
    <citation type="journal article" date="2015" name="Angew. Chem. Int. Ed.">
        <title>Identification of intermediates in the biosynthesis of PR toxin by Penicillium roqueforti.</title>
        <authorList>
            <person name="Riclea R."/>
            <person name="Dickschat J.S."/>
        </authorList>
    </citation>
    <scope>FUNCTION</scope>
</reference>
<reference key="7">
    <citation type="journal article" date="2017" name="Appl. Microbiol. Biotechnol.">
        <title>Penicillium roqueforti PR toxin gene cluster characterization.</title>
        <authorList>
            <person name="Hidalgo P.I."/>
            <person name="Poirier E."/>
            <person name="Ullan R.V."/>
            <person name="Piqueras J."/>
            <person name="Meslet-Cladiere L."/>
            <person name="Coton E."/>
            <person name="Coton M."/>
        </authorList>
    </citation>
    <scope>FUNCTION</scope>
    <scope>PATHWAY</scope>
</reference>
<dbReference type="EC" id="1.-.-.-" evidence="13"/>
<dbReference type="EMBL" id="HG792016">
    <property type="protein sequence ID" value="CDM31323.1"/>
    <property type="molecule type" value="Genomic_DNA"/>
</dbReference>
<dbReference type="SMR" id="W6Q403"/>
<dbReference type="STRING" id="1365484.W6Q403"/>
<dbReference type="GlyCosmos" id="W6Q403">
    <property type="glycosylation" value="1 site, No reported glycans"/>
</dbReference>
<dbReference type="OMA" id="FYDIYGA"/>
<dbReference type="OrthoDB" id="1470350at2759"/>
<dbReference type="Proteomes" id="UP000030686">
    <property type="component" value="Unassembled WGS sequence"/>
</dbReference>
<dbReference type="GO" id="GO:0016020">
    <property type="term" value="C:membrane"/>
    <property type="evidence" value="ECO:0007669"/>
    <property type="project" value="UniProtKB-SubCell"/>
</dbReference>
<dbReference type="GO" id="GO:0020037">
    <property type="term" value="F:heme binding"/>
    <property type="evidence" value="ECO:0007669"/>
    <property type="project" value="InterPro"/>
</dbReference>
<dbReference type="GO" id="GO:0005506">
    <property type="term" value="F:iron ion binding"/>
    <property type="evidence" value="ECO:0007669"/>
    <property type="project" value="InterPro"/>
</dbReference>
<dbReference type="GO" id="GO:0004497">
    <property type="term" value="F:monooxygenase activity"/>
    <property type="evidence" value="ECO:0007669"/>
    <property type="project" value="UniProtKB-KW"/>
</dbReference>
<dbReference type="GO" id="GO:0016705">
    <property type="term" value="F:oxidoreductase activity, acting on paired donors, with incorporation or reduction of molecular oxygen"/>
    <property type="evidence" value="ECO:0007669"/>
    <property type="project" value="InterPro"/>
</dbReference>
<dbReference type="GO" id="GO:0043386">
    <property type="term" value="P:mycotoxin biosynthetic process"/>
    <property type="evidence" value="ECO:0007669"/>
    <property type="project" value="UniProtKB-ARBA"/>
</dbReference>
<dbReference type="CDD" id="cd11058">
    <property type="entry name" value="CYP60B-like"/>
    <property type="match status" value="1"/>
</dbReference>
<dbReference type="FunFam" id="1.10.630.10:FF:000158">
    <property type="entry name" value="Cytochrome P450, putative (Eurofung)"/>
    <property type="match status" value="1"/>
</dbReference>
<dbReference type="Gene3D" id="1.10.630.10">
    <property type="entry name" value="Cytochrome P450"/>
    <property type="match status" value="1"/>
</dbReference>
<dbReference type="InterPro" id="IPR001128">
    <property type="entry name" value="Cyt_P450"/>
</dbReference>
<dbReference type="InterPro" id="IPR017972">
    <property type="entry name" value="Cyt_P450_CS"/>
</dbReference>
<dbReference type="InterPro" id="IPR002401">
    <property type="entry name" value="Cyt_P450_E_grp-I"/>
</dbReference>
<dbReference type="InterPro" id="IPR036396">
    <property type="entry name" value="Cyt_P450_sf"/>
</dbReference>
<dbReference type="InterPro" id="IPR050121">
    <property type="entry name" value="Cytochrome_P450_monoxygenase"/>
</dbReference>
<dbReference type="PANTHER" id="PTHR24305">
    <property type="entry name" value="CYTOCHROME P450"/>
    <property type="match status" value="1"/>
</dbReference>
<dbReference type="PANTHER" id="PTHR24305:SF210">
    <property type="entry name" value="CYTOCHROME P450 MONOOXYGENASE ASQL-RELATED"/>
    <property type="match status" value="1"/>
</dbReference>
<dbReference type="Pfam" id="PF00067">
    <property type="entry name" value="p450"/>
    <property type="match status" value="1"/>
</dbReference>
<dbReference type="PRINTS" id="PR00463">
    <property type="entry name" value="EP450I"/>
</dbReference>
<dbReference type="PRINTS" id="PR00385">
    <property type="entry name" value="P450"/>
</dbReference>
<dbReference type="SUPFAM" id="SSF48264">
    <property type="entry name" value="Cytochrome P450"/>
    <property type="match status" value="1"/>
</dbReference>
<dbReference type="PROSITE" id="PS00086">
    <property type="entry name" value="CYTOCHROME_P450"/>
    <property type="match status" value="1"/>
</dbReference>
<sequence>MTISPIPGLLFVYDQPPHSIYVLPFVISAAALCYFIGLIVFNLWFHPLARFPGPLLARSTLLWRMRMTLKGRIHRSIEAGHQKYGPVLRVAPNELSFASVSSWKSIYGHRPGGMIPTKSEFYDMYGSGFNSLCIGSERDPEKHRQMKSFLSAAFSTKALLEQEPLVSQTVDAFITRLGNDGGSETKGLDMTKWTEMVAFDILGEMAFGQSFECIIRGEPHYWQEMILKHLYFITVADNLRRLPFALTLARFLAPVLTAVRNKHSQFTRDKVAERMTNKNLRKDFMSNLISKVESGEVDREEMTAHASTLIIAGGETVATFLAATVYYLLKTPEVYKAMREEIRNRFPTYESINATSAQQLPYLQAVINEGLRIYPPGSQGFPRLSPGLAIDGEWIPEGTEIYTSAWTVTHNPQMFKDPMKFDPNRWLNEKSTDIKESSQPFSLGPRGCLGRNFALMELNLILSKLCWKYDMELMDQSLDWEGQSKVHVMWDKPALTVRFHSVDGSTLKA</sequence>
<comment type="function">
    <text evidence="4 5 6 7 8 9">Cytochrome P450 monooxygenase; part of the gene cluster that mediates the biosynthesis of PR-toxin, a bicyclic sesquiterpene belonging to the eremophilane class and acting as a mycotoxin (PubMed:24239699, PubMed:27921136). The first step of the pathway is catalyzed by the aristolochene synthase which performs the cyclization of trans,trans-farnesyl diphosphate (FPP) to the bicyclic sesquiterpene aristolochene (PubMed:15186158, PubMed:24239699, PubMed:8440737). Following the formation of aristolochene, the non-oxygenated aristolochene is converted to the trioxygenated intermediate eremofortin B, via 7-epi-neopetasone (PubMed:24239699, PubMed:26274339). This conversion appears to involve three enzymes, a hydroxysterol oxidase-like enzyme, the quinone-oxidase prx3 that forms the quinone-type-structure in the bicyclic nucleus of aristolochene with the C8-oxo group and the C-3 hydroxyl group, and the P450 monooxygenase ORF6 that introduces the epoxide at the double bond between carbons 1 and 2 (PubMed:24239699, PubMed:27921136). No monoxy or dioxy-intermediates have been reported to be released to the broth, so these three early oxidative reactions may be coupled together (PubMed:24239699). Eremofortin B is further oxidized by another P450 monooxygenase, that introduces a second epoxide between carbons 7 and 11 prior to acetylation to eremofortin A by the acetyltransferase ORF8 (PubMed:16345540, PubMed:24239699, PubMed:27921136). The second epoxidation may be performed by a second P450 monooxygenase (PubMed:24239699). After the acetylation step, eremofortin A is converted to eremofortin C and then to PR-toxin (PubMed:24239699). First the conversion of eremofortin A to eremofortin C proceeds by oxidation of the side chain of the molecule at C-12 and is catalyzed by the short-chain oxidoreductase prx1 (PubMed:16345540, PubMed:24239699). The cytochrome P450 monooxygenase ORF6 is probably also involved in this step (PubMed:27921136). The primary alcohol formed at C-12 is finally oxidized by the short-chain alcohol dehydrogenase prx4 that forms PR-toxin (PubMed:16345540, PubMed:24239699).</text>
</comment>
<comment type="cofactor">
    <cofactor evidence="1">
        <name>heme</name>
        <dbReference type="ChEBI" id="CHEBI:30413"/>
    </cofactor>
</comment>
<comment type="pathway">
    <text evidence="12 13">Sesquiterpene biosynthesis.</text>
</comment>
<comment type="subcellular location">
    <subcellularLocation>
        <location evidence="2">Membrane</location>
        <topology evidence="2">Multi-pass membrane protein</topology>
    </subcellularLocation>
</comment>
<comment type="similarity">
    <text evidence="11">Belongs to the cytochrome P450 family.</text>
</comment>
<feature type="chain" id="PRO_0000451226" description="Cytochrome P450 monooxygenase ORF9">
    <location>
        <begin position="1"/>
        <end position="509"/>
    </location>
</feature>
<feature type="transmembrane region" description="Helical" evidence="2">
    <location>
        <begin position="20"/>
        <end position="40"/>
    </location>
</feature>
<feature type="transmembrane region" description="Helical" evidence="2">
    <location>
        <begin position="309"/>
        <end position="329"/>
    </location>
</feature>
<feature type="binding site" description="axial binding residue" evidence="1">
    <location>
        <position position="448"/>
    </location>
    <ligand>
        <name>heme</name>
        <dbReference type="ChEBI" id="CHEBI:30413"/>
    </ligand>
    <ligandPart>
        <name>Fe</name>
        <dbReference type="ChEBI" id="CHEBI:18248"/>
    </ligandPart>
</feature>
<feature type="glycosylation site" description="N-linked (GlcNAc...) asparagine" evidence="3">
    <location>
        <position position="353"/>
    </location>
</feature>
<protein>
    <recommendedName>
        <fullName evidence="10">Cytochrome P450 monooxygenase ORF9</fullName>
        <ecNumber evidence="13">1.-.-.-</ecNumber>
    </recommendedName>
    <alternativeName>
        <fullName evidence="10">PR-toxin biosynthesis cluster protein 9</fullName>
    </alternativeName>
</protein>
<organism>
    <name type="scientific">Penicillium roqueforti (strain FM164)</name>
    <dbReference type="NCBI Taxonomy" id="1365484"/>
    <lineage>
        <taxon>Eukaryota</taxon>
        <taxon>Fungi</taxon>
        <taxon>Dikarya</taxon>
        <taxon>Ascomycota</taxon>
        <taxon>Pezizomycotina</taxon>
        <taxon>Eurotiomycetes</taxon>
        <taxon>Eurotiomycetidae</taxon>
        <taxon>Eurotiales</taxon>
        <taxon>Aspergillaceae</taxon>
        <taxon>Penicillium</taxon>
    </lineage>
</organism>
<gene>
    <name evidence="10" type="primary">ORF9</name>
    <name type="ORF">PROQFM164_S02g001473</name>
</gene>